<proteinExistence type="inferred from homology"/>
<sequence>MAATQYYGTGRRKTSTARVFAKAGSGNIVVNQRPLDQYFGRETARMVVRQPLELVEMTDKLDIYVTVKGGGITGQAGAIRHGITRALMQLDEALRPSLRSAGFVTRDARKVERKKVGLRKARRKPQFSKR</sequence>
<evidence type="ECO:0000255" key="1">
    <source>
        <dbReference type="HAMAP-Rule" id="MF_00532"/>
    </source>
</evidence>
<evidence type="ECO:0000305" key="2"/>
<keyword id="KW-0687">Ribonucleoprotein</keyword>
<keyword id="KW-0689">Ribosomal protein</keyword>
<name>RS9_SHEB9</name>
<feature type="chain" id="PRO_1000081833" description="Small ribosomal subunit protein uS9">
    <location>
        <begin position="1"/>
        <end position="130"/>
    </location>
</feature>
<accession>A9L112</accession>
<protein>
    <recommendedName>
        <fullName evidence="1">Small ribosomal subunit protein uS9</fullName>
    </recommendedName>
    <alternativeName>
        <fullName evidence="2">30S ribosomal protein S9</fullName>
    </alternativeName>
</protein>
<dbReference type="EMBL" id="CP000891">
    <property type="protein sequence ID" value="ABX47911.1"/>
    <property type="molecule type" value="Genomic_DNA"/>
</dbReference>
<dbReference type="RefSeq" id="WP_006083052.1">
    <property type="nucleotide sequence ID" value="NC_009997.1"/>
</dbReference>
<dbReference type="SMR" id="A9L112"/>
<dbReference type="GeneID" id="94726683"/>
<dbReference type="KEGG" id="sbn:Sbal195_0733"/>
<dbReference type="HOGENOM" id="CLU_046483_2_1_6"/>
<dbReference type="Proteomes" id="UP000000770">
    <property type="component" value="Chromosome"/>
</dbReference>
<dbReference type="GO" id="GO:0022627">
    <property type="term" value="C:cytosolic small ribosomal subunit"/>
    <property type="evidence" value="ECO:0007669"/>
    <property type="project" value="TreeGrafter"/>
</dbReference>
<dbReference type="GO" id="GO:0003723">
    <property type="term" value="F:RNA binding"/>
    <property type="evidence" value="ECO:0007669"/>
    <property type="project" value="TreeGrafter"/>
</dbReference>
<dbReference type="GO" id="GO:0003735">
    <property type="term" value="F:structural constituent of ribosome"/>
    <property type="evidence" value="ECO:0007669"/>
    <property type="project" value="InterPro"/>
</dbReference>
<dbReference type="GO" id="GO:0006412">
    <property type="term" value="P:translation"/>
    <property type="evidence" value="ECO:0007669"/>
    <property type="project" value="UniProtKB-UniRule"/>
</dbReference>
<dbReference type="FunFam" id="3.30.230.10:FF:000001">
    <property type="entry name" value="30S ribosomal protein S9"/>
    <property type="match status" value="1"/>
</dbReference>
<dbReference type="Gene3D" id="3.30.230.10">
    <property type="match status" value="1"/>
</dbReference>
<dbReference type="HAMAP" id="MF_00532_B">
    <property type="entry name" value="Ribosomal_uS9_B"/>
    <property type="match status" value="1"/>
</dbReference>
<dbReference type="InterPro" id="IPR020568">
    <property type="entry name" value="Ribosomal_Su5_D2-typ_SF"/>
</dbReference>
<dbReference type="InterPro" id="IPR000754">
    <property type="entry name" value="Ribosomal_uS9"/>
</dbReference>
<dbReference type="InterPro" id="IPR023035">
    <property type="entry name" value="Ribosomal_uS9_bac/plastid"/>
</dbReference>
<dbReference type="InterPro" id="IPR020574">
    <property type="entry name" value="Ribosomal_uS9_CS"/>
</dbReference>
<dbReference type="InterPro" id="IPR014721">
    <property type="entry name" value="Ribsml_uS5_D2-typ_fold_subgr"/>
</dbReference>
<dbReference type="NCBIfam" id="NF001099">
    <property type="entry name" value="PRK00132.1"/>
    <property type="match status" value="1"/>
</dbReference>
<dbReference type="PANTHER" id="PTHR21569">
    <property type="entry name" value="RIBOSOMAL PROTEIN S9"/>
    <property type="match status" value="1"/>
</dbReference>
<dbReference type="PANTHER" id="PTHR21569:SF1">
    <property type="entry name" value="SMALL RIBOSOMAL SUBUNIT PROTEIN US9M"/>
    <property type="match status" value="1"/>
</dbReference>
<dbReference type="Pfam" id="PF00380">
    <property type="entry name" value="Ribosomal_S9"/>
    <property type="match status" value="1"/>
</dbReference>
<dbReference type="SUPFAM" id="SSF54211">
    <property type="entry name" value="Ribosomal protein S5 domain 2-like"/>
    <property type="match status" value="1"/>
</dbReference>
<dbReference type="PROSITE" id="PS00360">
    <property type="entry name" value="RIBOSOMAL_S9"/>
    <property type="match status" value="1"/>
</dbReference>
<organism>
    <name type="scientific">Shewanella baltica (strain OS195)</name>
    <dbReference type="NCBI Taxonomy" id="399599"/>
    <lineage>
        <taxon>Bacteria</taxon>
        <taxon>Pseudomonadati</taxon>
        <taxon>Pseudomonadota</taxon>
        <taxon>Gammaproteobacteria</taxon>
        <taxon>Alteromonadales</taxon>
        <taxon>Shewanellaceae</taxon>
        <taxon>Shewanella</taxon>
    </lineage>
</organism>
<gene>
    <name evidence="1" type="primary">rpsI</name>
    <name type="ordered locus">Sbal195_0733</name>
</gene>
<comment type="similarity">
    <text evidence="1">Belongs to the universal ribosomal protein uS9 family.</text>
</comment>
<reference key="1">
    <citation type="submission" date="2007-11" db="EMBL/GenBank/DDBJ databases">
        <title>Complete sequence of chromosome of Shewanella baltica OS195.</title>
        <authorList>
            <consortium name="US DOE Joint Genome Institute"/>
            <person name="Copeland A."/>
            <person name="Lucas S."/>
            <person name="Lapidus A."/>
            <person name="Barry K."/>
            <person name="Glavina del Rio T."/>
            <person name="Dalin E."/>
            <person name="Tice H."/>
            <person name="Pitluck S."/>
            <person name="Chain P."/>
            <person name="Malfatti S."/>
            <person name="Shin M."/>
            <person name="Vergez L."/>
            <person name="Schmutz J."/>
            <person name="Larimer F."/>
            <person name="Land M."/>
            <person name="Hauser L."/>
            <person name="Kyrpides N."/>
            <person name="Kim E."/>
            <person name="Brettar I."/>
            <person name="Rodrigues J."/>
            <person name="Konstantinidis K."/>
            <person name="Klappenbach J."/>
            <person name="Hofle M."/>
            <person name="Tiedje J."/>
            <person name="Richardson P."/>
        </authorList>
    </citation>
    <scope>NUCLEOTIDE SEQUENCE [LARGE SCALE GENOMIC DNA]</scope>
    <source>
        <strain>OS195</strain>
    </source>
</reference>